<dbReference type="EMBL" id="AY090560">
    <property type="protein sequence ID" value="AAN05785.1"/>
    <property type="molecule type" value="Genomic_DNA"/>
</dbReference>
<dbReference type="SMR" id="Q83WB2"/>
<dbReference type="STRING" id="636.AAW15_16110"/>
<dbReference type="OMA" id="WKHGIET"/>
<dbReference type="GO" id="GO:0005737">
    <property type="term" value="C:cytoplasm"/>
    <property type="evidence" value="ECO:0000250"/>
    <property type="project" value="UniProtKB"/>
</dbReference>
<dbReference type="GO" id="GO:0042803">
    <property type="term" value="F:protein homodimerization activity"/>
    <property type="evidence" value="ECO:0000250"/>
    <property type="project" value="UniProtKB"/>
</dbReference>
<dbReference type="GO" id="GO:0030643">
    <property type="term" value="P:intracellular phosphate ion homeostasis"/>
    <property type="evidence" value="ECO:0007669"/>
    <property type="project" value="InterPro"/>
</dbReference>
<dbReference type="GO" id="GO:0045936">
    <property type="term" value="P:negative regulation of phosphate metabolic process"/>
    <property type="evidence" value="ECO:0000250"/>
    <property type="project" value="UniProtKB"/>
</dbReference>
<dbReference type="GO" id="GO:2000186">
    <property type="term" value="P:negative regulation of phosphate transmembrane transport"/>
    <property type="evidence" value="ECO:0000250"/>
    <property type="project" value="UniProtKB"/>
</dbReference>
<dbReference type="GO" id="GO:0006817">
    <property type="term" value="P:phosphate ion transport"/>
    <property type="evidence" value="ECO:0007669"/>
    <property type="project" value="UniProtKB-KW"/>
</dbReference>
<dbReference type="GO" id="GO:0006355">
    <property type="term" value="P:regulation of DNA-templated transcription"/>
    <property type="evidence" value="ECO:0000315"/>
    <property type="project" value="UniProtKB"/>
</dbReference>
<dbReference type="GO" id="GO:0019220">
    <property type="term" value="P:regulation of phosphate metabolic process"/>
    <property type="evidence" value="ECO:0000270"/>
    <property type="project" value="UniProtKB"/>
</dbReference>
<dbReference type="FunFam" id="1.20.58.220:FF:000001">
    <property type="entry name" value="Phosphate-specific transport system accessory protein PhoU"/>
    <property type="match status" value="1"/>
</dbReference>
<dbReference type="FunFam" id="1.20.58.220:FF:000002">
    <property type="entry name" value="Phosphate-specific transport system accessory protein PhoU"/>
    <property type="match status" value="1"/>
</dbReference>
<dbReference type="Gene3D" id="1.20.58.220">
    <property type="entry name" value="Phosphate transport system protein phou homolog 2, domain 2"/>
    <property type="match status" value="2"/>
</dbReference>
<dbReference type="InterPro" id="IPR028366">
    <property type="entry name" value="P_transport_PhoU"/>
</dbReference>
<dbReference type="InterPro" id="IPR038078">
    <property type="entry name" value="PhoU-like_sf"/>
</dbReference>
<dbReference type="InterPro" id="IPR026022">
    <property type="entry name" value="PhoU_dom"/>
</dbReference>
<dbReference type="NCBIfam" id="TIGR02135">
    <property type="entry name" value="phoU_full"/>
    <property type="match status" value="1"/>
</dbReference>
<dbReference type="NCBIfam" id="NF008332">
    <property type="entry name" value="PRK11115.1"/>
    <property type="match status" value="1"/>
</dbReference>
<dbReference type="PANTHER" id="PTHR42930">
    <property type="entry name" value="PHOSPHATE-SPECIFIC TRANSPORT SYSTEM ACCESSORY PROTEIN PHOU"/>
    <property type="match status" value="1"/>
</dbReference>
<dbReference type="PANTHER" id="PTHR42930:SF3">
    <property type="entry name" value="PHOSPHATE-SPECIFIC TRANSPORT SYSTEM ACCESSORY PROTEIN PHOU"/>
    <property type="match status" value="1"/>
</dbReference>
<dbReference type="Pfam" id="PF01895">
    <property type="entry name" value="PhoU"/>
    <property type="match status" value="2"/>
</dbReference>
<dbReference type="PIRSF" id="PIRSF003107">
    <property type="entry name" value="PhoU"/>
    <property type="match status" value="1"/>
</dbReference>
<dbReference type="SUPFAM" id="SSF109755">
    <property type="entry name" value="PhoU-like"/>
    <property type="match status" value="1"/>
</dbReference>
<gene>
    <name evidence="7" type="primary">phoU</name>
</gene>
<sequence>MDNLNLNKHTSGQFNAELEYIRTQVMSMGGLVEQQLTDAITAMHNQDADLARRVVEGDAKVNMMEIAIDEACVKIIAKRQPTASDLRLVMAIIKTISELERIGDVADKICRTALEKFSQQHQPLLVSLESLGQHTVQMLHDVLDAFARMDLNEAIRIYREDKKVDQEYEGIVRQLMTYMMEDSRTIPSVLTALFCARSIERIGDRCQNICEFIFYYVKGQDFRHIGGDDLEQLLTDHRRVDEA</sequence>
<organism>
    <name type="scientific">Edwardsiella tarda</name>
    <dbReference type="NCBI Taxonomy" id="636"/>
    <lineage>
        <taxon>Bacteria</taxon>
        <taxon>Pseudomonadati</taxon>
        <taxon>Pseudomonadota</taxon>
        <taxon>Gammaproteobacteria</taxon>
        <taxon>Enterobacterales</taxon>
        <taxon>Hafniaceae</taxon>
        <taxon>Edwardsiella</taxon>
    </lineage>
</organism>
<name>PHOU_EDWTA</name>
<keyword id="KW-0963">Cytoplasm</keyword>
<keyword id="KW-0592">Phosphate transport</keyword>
<keyword id="KW-0813">Transport</keyword>
<protein>
    <recommendedName>
        <fullName evidence="3">Phosphate-specific transport system accessory protein PhoU</fullName>
        <shortName evidence="3">Pst system accessory protein PhoU</shortName>
    </recommendedName>
    <alternativeName>
        <fullName evidence="7">Repressor protein PhoU</fullName>
    </alternativeName>
</protein>
<proteinExistence type="evidence at protein level"/>
<comment type="function">
    <text evidence="1">Part of the phosphate (Pho) regulon, which plays a key role in phosphate homeostasis. Encoded together with proteins of the phosphate-specific transport (Pst) system in the polycistronic pstSCAB-phoU operon. PhoU is essential for the repression of the Pho regulon at high phosphate conditions. In this role, it may bind, possibly as a chaperone, to PhoR, PhoB or a PhoR-PhoB complex to promote dephosphorylation of phospho-PhoB, or inhibit formation of the PhoR-PhoB transitory complex (By similarity).</text>
</comment>
<comment type="subunit">
    <text evidence="2 5">Homodimer. Interacts with phosphate regulon transcriptional regulatory protein PhoB and ferric uptake regulation protein Fur.</text>
</comment>
<comment type="subcellular location">
    <subcellularLocation>
        <location evidence="3">Cytoplasm</location>
    </subcellularLocation>
</comment>
<comment type="induction">
    <text evidence="5">Decreased expression in high concentrations of phosphate and iron. Transcriptionally regulated by PhoB.</text>
</comment>
<comment type="disruption phenotype">
    <text evidence="5">Entirely abolishes the secretion of proteins from both type III and type VI secretion systems, T3SS and T6SS, respectively. Transcription of phoB is reduced by about 25% compared with wild-type. Transcription of esrC is completely abolished. Transcription of fur is increased.</text>
</comment>
<comment type="similarity">
    <text evidence="4">Belongs to the PhoU family.</text>
</comment>
<evidence type="ECO:0000250" key="1"/>
<evidence type="ECO:0000250" key="2">
    <source>
        <dbReference type="UniProtKB" id="O67053"/>
    </source>
</evidence>
<evidence type="ECO:0000250" key="3">
    <source>
        <dbReference type="UniProtKB" id="P0A9K7"/>
    </source>
</evidence>
<evidence type="ECO:0000255" key="4"/>
<evidence type="ECO:0000269" key="5">
    <source>
    </source>
</evidence>
<evidence type="ECO:0000305" key="6"/>
<evidence type="ECO:0000312" key="7">
    <source>
        <dbReference type="EMBL" id="AAN05785.1"/>
    </source>
</evidence>
<accession>Q83WB2</accession>
<feature type="chain" id="PRO_0000420873" description="Phosphate-specific transport system accessory protein PhoU">
    <location>
        <begin position="1"/>
        <end position="243"/>
    </location>
</feature>
<reference evidence="7" key="1">
    <citation type="journal article" date="2003" name="Infect. Immun.">
        <title>Functional genomics approach to the identification of virulence genes involved in Edwardsiella tarda pathogenesis.</title>
        <authorList>
            <person name="Srinivasa Rao P.S."/>
            <person name="Lim T.M."/>
            <person name="Leung K.Y."/>
        </authorList>
    </citation>
    <scope>NUCLEOTIDE SEQUENCE [GENOMIC DNA]</scope>
    <source>
        <strain evidence="7">PPD130/91</strain>
    </source>
</reference>
<reference evidence="6" key="2">
    <citation type="journal article" date="2011" name="J. Biol. Chem.">
        <title>Two-component PhoB-PhoR regulatory system and ferric uptake regulator sense phosphate and iron to control virulence genes in type III and VI secretion systems of Edwardsiella tarda.</title>
        <authorList>
            <person name="Chakraborty S."/>
            <person name="Sivaraman J."/>
            <person name="Leung K.Y."/>
            <person name="Mok Y.K."/>
        </authorList>
    </citation>
    <scope>OPERON STRUCTURE</scope>
    <scope>SUBUNIT</scope>
    <scope>INTERACTION WITH PHOB AND FUR</scope>
    <scope>INDUCTION</scope>
    <scope>DISRUPTION PHENOTYPE</scope>
    <source>
        <strain evidence="5">PPD130/91</strain>
    </source>
</reference>